<gene>
    <name evidence="1" type="primary">rhaS</name>
    <name type="ordered locus">SbBS512_E4384</name>
</gene>
<comment type="function">
    <text evidence="1">Activates expression of the rhaBAD and rhaT operons.</text>
</comment>
<comment type="subunit">
    <text evidence="1">Binds DNA as a dimer.</text>
</comment>
<comment type="subcellular location">
    <subcellularLocation>
        <location evidence="1">Cytoplasm</location>
    </subcellularLocation>
</comment>
<keyword id="KW-0010">Activator</keyword>
<keyword id="KW-0963">Cytoplasm</keyword>
<keyword id="KW-0238">DNA-binding</keyword>
<keyword id="KW-1185">Reference proteome</keyword>
<keyword id="KW-0677">Repeat</keyword>
<keyword id="KW-0684">Rhamnose metabolism</keyword>
<keyword id="KW-0804">Transcription</keyword>
<keyword id="KW-0805">Transcription regulation</keyword>
<protein>
    <recommendedName>
        <fullName evidence="1">HTH-type transcriptional activator RhaS</fullName>
    </recommendedName>
    <alternativeName>
        <fullName evidence="1">L-rhamnose operon regulatory protein RhaS</fullName>
    </alternativeName>
</protein>
<accession>B2TVP7</accession>
<reference key="1">
    <citation type="submission" date="2008-05" db="EMBL/GenBank/DDBJ databases">
        <title>Complete sequence of Shigella boydii serotype 18 strain BS512.</title>
        <authorList>
            <person name="Rasko D.A."/>
            <person name="Rosovitz M."/>
            <person name="Maurelli A.T."/>
            <person name="Myers G."/>
            <person name="Seshadri R."/>
            <person name="Cer R."/>
            <person name="Jiang L."/>
            <person name="Ravel J."/>
            <person name="Sebastian Y."/>
        </authorList>
    </citation>
    <scope>NUCLEOTIDE SEQUENCE [LARGE SCALE GENOMIC DNA]</scope>
    <source>
        <strain>CDC 3083-94 / BS512</strain>
    </source>
</reference>
<proteinExistence type="inferred from homology"/>
<dbReference type="EMBL" id="CP001063">
    <property type="protein sequence ID" value="ACD08505.1"/>
    <property type="molecule type" value="Genomic_DNA"/>
</dbReference>
<dbReference type="RefSeq" id="WP_000217136.1">
    <property type="nucleotide sequence ID" value="NC_010658.1"/>
</dbReference>
<dbReference type="SMR" id="B2TVP7"/>
<dbReference type="STRING" id="344609.SbBS512_E4384"/>
<dbReference type="KEGG" id="sbc:SbBS512_E4384"/>
<dbReference type="HOGENOM" id="CLU_000445_88_5_6"/>
<dbReference type="Proteomes" id="UP000001030">
    <property type="component" value="Chromosome"/>
</dbReference>
<dbReference type="GO" id="GO:0005737">
    <property type="term" value="C:cytoplasm"/>
    <property type="evidence" value="ECO:0007669"/>
    <property type="project" value="UniProtKB-SubCell"/>
</dbReference>
<dbReference type="GO" id="GO:0003700">
    <property type="term" value="F:DNA-binding transcription factor activity"/>
    <property type="evidence" value="ECO:0007669"/>
    <property type="project" value="UniProtKB-UniRule"/>
</dbReference>
<dbReference type="GO" id="GO:0043565">
    <property type="term" value="F:sequence-specific DNA binding"/>
    <property type="evidence" value="ECO:0007669"/>
    <property type="project" value="InterPro"/>
</dbReference>
<dbReference type="GO" id="GO:0045893">
    <property type="term" value="P:positive regulation of DNA-templated transcription"/>
    <property type="evidence" value="ECO:0007669"/>
    <property type="project" value="UniProtKB-UniRule"/>
</dbReference>
<dbReference type="GO" id="GO:0019299">
    <property type="term" value="P:rhamnose metabolic process"/>
    <property type="evidence" value="ECO:0007669"/>
    <property type="project" value="UniProtKB-UniRule"/>
</dbReference>
<dbReference type="CDD" id="cd06977">
    <property type="entry name" value="cupin_RhaR_RhaS-like_N"/>
    <property type="match status" value="1"/>
</dbReference>
<dbReference type="FunFam" id="1.10.10.60:FF:000181">
    <property type="entry name" value="HTH-type transcriptional activator RhaS"/>
    <property type="match status" value="1"/>
</dbReference>
<dbReference type="FunFam" id="2.60.120.10:FF:000041">
    <property type="entry name" value="HTH-type transcriptional activator RhaS"/>
    <property type="match status" value="1"/>
</dbReference>
<dbReference type="Gene3D" id="1.10.10.60">
    <property type="entry name" value="Homeodomain-like"/>
    <property type="match status" value="1"/>
</dbReference>
<dbReference type="Gene3D" id="2.60.120.10">
    <property type="entry name" value="Jelly Rolls"/>
    <property type="match status" value="1"/>
</dbReference>
<dbReference type="HAMAP" id="MF_01534">
    <property type="entry name" value="HTH_type_RhaS"/>
    <property type="match status" value="1"/>
</dbReference>
<dbReference type="InterPro" id="IPR003313">
    <property type="entry name" value="AraC-bd"/>
</dbReference>
<dbReference type="InterPro" id="IPR050204">
    <property type="entry name" value="AraC_XylS_family_regulators"/>
</dbReference>
<dbReference type="InterPro" id="IPR009057">
    <property type="entry name" value="Homeodomain-like_sf"/>
</dbReference>
<dbReference type="InterPro" id="IPR037923">
    <property type="entry name" value="HTH-like"/>
</dbReference>
<dbReference type="InterPro" id="IPR018060">
    <property type="entry name" value="HTH_AraC"/>
</dbReference>
<dbReference type="InterPro" id="IPR047220">
    <property type="entry name" value="RhaR_RhaS-like_N"/>
</dbReference>
<dbReference type="InterPro" id="IPR014710">
    <property type="entry name" value="RmlC-like_jellyroll"/>
</dbReference>
<dbReference type="InterPro" id="IPR020449">
    <property type="entry name" value="Tscrpt_reg_AraC-type_HTH"/>
</dbReference>
<dbReference type="InterPro" id="IPR023609">
    <property type="entry name" value="Tscrpt_reg_HTH_RhaS"/>
</dbReference>
<dbReference type="NCBIfam" id="NF010028">
    <property type="entry name" value="PRK13503.1"/>
    <property type="match status" value="1"/>
</dbReference>
<dbReference type="PANTHER" id="PTHR46796:SF13">
    <property type="entry name" value="HTH-TYPE TRANSCRIPTIONAL ACTIVATOR RHAS"/>
    <property type="match status" value="1"/>
</dbReference>
<dbReference type="PANTHER" id="PTHR46796">
    <property type="entry name" value="HTH-TYPE TRANSCRIPTIONAL ACTIVATOR RHAS-RELATED"/>
    <property type="match status" value="1"/>
</dbReference>
<dbReference type="Pfam" id="PF02311">
    <property type="entry name" value="AraC_binding"/>
    <property type="match status" value="1"/>
</dbReference>
<dbReference type="Pfam" id="PF12833">
    <property type="entry name" value="HTH_18"/>
    <property type="match status" value="1"/>
</dbReference>
<dbReference type="PRINTS" id="PR00032">
    <property type="entry name" value="HTHARAC"/>
</dbReference>
<dbReference type="SMART" id="SM00342">
    <property type="entry name" value="HTH_ARAC"/>
    <property type="match status" value="1"/>
</dbReference>
<dbReference type="SUPFAM" id="SSF46689">
    <property type="entry name" value="Homeodomain-like"/>
    <property type="match status" value="2"/>
</dbReference>
<dbReference type="SUPFAM" id="SSF51215">
    <property type="entry name" value="Regulatory protein AraC"/>
    <property type="match status" value="1"/>
</dbReference>
<dbReference type="PROSITE" id="PS01124">
    <property type="entry name" value="HTH_ARAC_FAMILY_2"/>
    <property type="match status" value="1"/>
</dbReference>
<sequence>MTVLHSVDFFPSGNASVAIEPRLPQADFPEHHHDFHEIVIVEHGTGIHVFNGQPYTITGGTVCFVRDHDRHLYEHTDNLCLTNVLYRSPDRFQFLAGLNQLLPQELDGQYPSHWRVNHSVLQQVRQLVAQMEQQEGENDLPSTASREILFMQLLLLLRKSSLQENLENSASRLNLLLAWLEDHFADEVNWDAVADQFSLSLRTLHRQLKQQTGLTPQRYLNRLRLMKARHLLRHSEASVTDIAYRCGFSDSNHFSTLFHREFNWSPRDIRQGRDGFLQ</sequence>
<organism>
    <name type="scientific">Shigella boydii serotype 18 (strain CDC 3083-94 / BS512)</name>
    <dbReference type="NCBI Taxonomy" id="344609"/>
    <lineage>
        <taxon>Bacteria</taxon>
        <taxon>Pseudomonadati</taxon>
        <taxon>Pseudomonadota</taxon>
        <taxon>Gammaproteobacteria</taxon>
        <taxon>Enterobacterales</taxon>
        <taxon>Enterobacteriaceae</taxon>
        <taxon>Shigella</taxon>
    </lineage>
</organism>
<evidence type="ECO:0000255" key="1">
    <source>
        <dbReference type="HAMAP-Rule" id="MF_01534"/>
    </source>
</evidence>
<name>RHAS_SHIB3</name>
<feature type="chain" id="PRO_1000200966" description="HTH-type transcriptional activator RhaS">
    <location>
        <begin position="1"/>
        <end position="278"/>
    </location>
</feature>
<feature type="domain" description="HTH araC/xylS-type" evidence="1">
    <location>
        <begin position="174"/>
        <end position="272"/>
    </location>
</feature>
<feature type="DNA-binding region" description="H-T-H motif" evidence="1">
    <location>
        <begin position="191"/>
        <end position="212"/>
    </location>
</feature>
<feature type="DNA-binding region" description="H-T-H motif" evidence="1">
    <location>
        <begin position="239"/>
        <end position="262"/>
    </location>
</feature>
<feature type="site" description="Interaction with sigma-70" evidence="1">
    <location>
        <position position="241"/>
    </location>
</feature>
<feature type="site" description="Interaction with sigma-70" evidence="1">
    <location>
        <position position="250"/>
    </location>
</feature>